<keyword id="KW-0963">Cytoplasm</keyword>
<keyword id="KW-0444">Lipid biosynthesis</keyword>
<keyword id="KW-0443">Lipid metabolism</keyword>
<keyword id="KW-0520">NAD</keyword>
<keyword id="KW-0521">NADP</keyword>
<keyword id="KW-0547">Nucleotide-binding</keyword>
<keyword id="KW-0560">Oxidoreductase</keyword>
<keyword id="KW-0594">Phospholipid biosynthesis</keyword>
<keyword id="KW-1208">Phospholipid metabolism</keyword>
<keyword id="KW-1185">Reference proteome</keyword>
<organism>
    <name type="scientific">Mycobacterium leprae (strain TN)</name>
    <dbReference type="NCBI Taxonomy" id="272631"/>
    <lineage>
        <taxon>Bacteria</taxon>
        <taxon>Bacillati</taxon>
        <taxon>Actinomycetota</taxon>
        <taxon>Actinomycetes</taxon>
        <taxon>Mycobacteriales</taxon>
        <taxon>Mycobacteriaceae</taxon>
        <taxon>Mycobacterium</taxon>
    </lineage>
</organism>
<dbReference type="EC" id="1.1.1.94" evidence="1"/>
<dbReference type="EMBL" id="Z99263">
    <property type="protein sequence ID" value="CAB16453.1"/>
    <property type="molecule type" value="Genomic_DNA"/>
</dbReference>
<dbReference type="EMBL" id="AL583923">
    <property type="protein sequence ID" value="CAC30632.1"/>
    <property type="status" value="ALT_INIT"/>
    <property type="molecule type" value="Genomic_DNA"/>
</dbReference>
<dbReference type="PIR" id="A87119">
    <property type="entry name" value="A87119"/>
</dbReference>
<dbReference type="PIR" id="T45431">
    <property type="entry name" value="T45431"/>
</dbReference>
<dbReference type="RefSeq" id="WP_041323875.1">
    <property type="nucleotide sequence ID" value="NC_002677.1"/>
</dbReference>
<dbReference type="SMR" id="Q9CBR9"/>
<dbReference type="STRING" id="272631.gene:17575522"/>
<dbReference type="KEGG" id="mle:ML1679"/>
<dbReference type="Leproma" id="ML1679"/>
<dbReference type="eggNOG" id="COG0240">
    <property type="taxonomic scope" value="Bacteria"/>
</dbReference>
<dbReference type="HOGENOM" id="CLU_033449_0_2_11"/>
<dbReference type="UniPathway" id="UPA00940"/>
<dbReference type="Proteomes" id="UP000000806">
    <property type="component" value="Chromosome"/>
</dbReference>
<dbReference type="GO" id="GO:0005829">
    <property type="term" value="C:cytosol"/>
    <property type="evidence" value="ECO:0007669"/>
    <property type="project" value="TreeGrafter"/>
</dbReference>
<dbReference type="GO" id="GO:0047952">
    <property type="term" value="F:glycerol-3-phosphate dehydrogenase [NAD(P)+] activity"/>
    <property type="evidence" value="ECO:0007669"/>
    <property type="project" value="UniProtKB-UniRule"/>
</dbReference>
<dbReference type="GO" id="GO:0051287">
    <property type="term" value="F:NAD binding"/>
    <property type="evidence" value="ECO:0007669"/>
    <property type="project" value="InterPro"/>
</dbReference>
<dbReference type="GO" id="GO:0005975">
    <property type="term" value="P:carbohydrate metabolic process"/>
    <property type="evidence" value="ECO:0007669"/>
    <property type="project" value="InterPro"/>
</dbReference>
<dbReference type="GO" id="GO:0046167">
    <property type="term" value="P:glycerol-3-phosphate biosynthetic process"/>
    <property type="evidence" value="ECO:0007669"/>
    <property type="project" value="UniProtKB-UniRule"/>
</dbReference>
<dbReference type="GO" id="GO:0046168">
    <property type="term" value="P:glycerol-3-phosphate catabolic process"/>
    <property type="evidence" value="ECO:0007669"/>
    <property type="project" value="InterPro"/>
</dbReference>
<dbReference type="GO" id="GO:0006650">
    <property type="term" value="P:glycerophospholipid metabolic process"/>
    <property type="evidence" value="ECO:0007669"/>
    <property type="project" value="UniProtKB-UniRule"/>
</dbReference>
<dbReference type="GO" id="GO:0008654">
    <property type="term" value="P:phospholipid biosynthetic process"/>
    <property type="evidence" value="ECO:0007669"/>
    <property type="project" value="UniProtKB-KW"/>
</dbReference>
<dbReference type="FunFam" id="1.10.1040.10:FF:000001">
    <property type="entry name" value="Glycerol-3-phosphate dehydrogenase [NAD(P)+]"/>
    <property type="match status" value="1"/>
</dbReference>
<dbReference type="FunFam" id="3.40.50.720:FF:000019">
    <property type="entry name" value="Glycerol-3-phosphate dehydrogenase [NAD(P)+]"/>
    <property type="match status" value="1"/>
</dbReference>
<dbReference type="Gene3D" id="1.10.1040.10">
    <property type="entry name" value="N-(1-d-carboxylethyl)-l-norvaline Dehydrogenase, domain 2"/>
    <property type="match status" value="1"/>
</dbReference>
<dbReference type="Gene3D" id="3.40.50.720">
    <property type="entry name" value="NAD(P)-binding Rossmann-like Domain"/>
    <property type="match status" value="1"/>
</dbReference>
<dbReference type="HAMAP" id="MF_00394">
    <property type="entry name" value="NAD_Glyc3P_dehydrog"/>
    <property type="match status" value="1"/>
</dbReference>
<dbReference type="InterPro" id="IPR008927">
    <property type="entry name" value="6-PGluconate_DH-like_C_sf"/>
</dbReference>
<dbReference type="InterPro" id="IPR013328">
    <property type="entry name" value="6PGD_dom2"/>
</dbReference>
<dbReference type="InterPro" id="IPR006168">
    <property type="entry name" value="G3P_DH_NAD-dep"/>
</dbReference>
<dbReference type="InterPro" id="IPR006109">
    <property type="entry name" value="G3P_DH_NAD-dep_C"/>
</dbReference>
<dbReference type="InterPro" id="IPR011128">
    <property type="entry name" value="G3P_DH_NAD-dep_N"/>
</dbReference>
<dbReference type="InterPro" id="IPR036291">
    <property type="entry name" value="NAD(P)-bd_dom_sf"/>
</dbReference>
<dbReference type="NCBIfam" id="NF000940">
    <property type="entry name" value="PRK00094.1-2"/>
    <property type="match status" value="1"/>
</dbReference>
<dbReference type="NCBIfam" id="NF000942">
    <property type="entry name" value="PRK00094.1-4"/>
    <property type="match status" value="1"/>
</dbReference>
<dbReference type="PANTHER" id="PTHR11728">
    <property type="entry name" value="GLYCEROL-3-PHOSPHATE DEHYDROGENASE"/>
    <property type="match status" value="1"/>
</dbReference>
<dbReference type="PANTHER" id="PTHR11728:SF1">
    <property type="entry name" value="GLYCEROL-3-PHOSPHATE DEHYDROGENASE [NAD(+)] 2, CHLOROPLASTIC"/>
    <property type="match status" value="1"/>
</dbReference>
<dbReference type="Pfam" id="PF07479">
    <property type="entry name" value="NAD_Gly3P_dh_C"/>
    <property type="match status" value="1"/>
</dbReference>
<dbReference type="Pfam" id="PF01210">
    <property type="entry name" value="NAD_Gly3P_dh_N"/>
    <property type="match status" value="1"/>
</dbReference>
<dbReference type="PIRSF" id="PIRSF000114">
    <property type="entry name" value="Glycerol-3-P_dh"/>
    <property type="match status" value="1"/>
</dbReference>
<dbReference type="PRINTS" id="PR00077">
    <property type="entry name" value="GPDHDRGNASE"/>
</dbReference>
<dbReference type="SUPFAM" id="SSF48179">
    <property type="entry name" value="6-phosphogluconate dehydrogenase C-terminal domain-like"/>
    <property type="match status" value="1"/>
</dbReference>
<dbReference type="SUPFAM" id="SSF51735">
    <property type="entry name" value="NAD(P)-binding Rossmann-fold domains"/>
    <property type="match status" value="1"/>
</dbReference>
<dbReference type="PROSITE" id="PS00957">
    <property type="entry name" value="NAD_G3PDH"/>
    <property type="match status" value="1"/>
</dbReference>
<comment type="function">
    <text evidence="1">Catalyzes the reduction of the glycolytic intermediate dihydroxyacetone phosphate (DHAP) to sn-glycerol 3-phosphate (G3P), the key precursor for phospholipid synthesis.</text>
</comment>
<comment type="catalytic activity">
    <reaction evidence="1">
        <text>sn-glycerol 3-phosphate + NAD(+) = dihydroxyacetone phosphate + NADH + H(+)</text>
        <dbReference type="Rhea" id="RHEA:11092"/>
        <dbReference type="ChEBI" id="CHEBI:15378"/>
        <dbReference type="ChEBI" id="CHEBI:57540"/>
        <dbReference type="ChEBI" id="CHEBI:57597"/>
        <dbReference type="ChEBI" id="CHEBI:57642"/>
        <dbReference type="ChEBI" id="CHEBI:57945"/>
        <dbReference type="EC" id="1.1.1.94"/>
    </reaction>
    <physiologicalReaction direction="right-to-left" evidence="1">
        <dbReference type="Rhea" id="RHEA:11094"/>
    </physiologicalReaction>
</comment>
<comment type="catalytic activity">
    <reaction evidence="1">
        <text>sn-glycerol 3-phosphate + NADP(+) = dihydroxyacetone phosphate + NADPH + H(+)</text>
        <dbReference type="Rhea" id="RHEA:11096"/>
        <dbReference type="ChEBI" id="CHEBI:15378"/>
        <dbReference type="ChEBI" id="CHEBI:57597"/>
        <dbReference type="ChEBI" id="CHEBI:57642"/>
        <dbReference type="ChEBI" id="CHEBI:57783"/>
        <dbReference type="ChEBI" id="CHEBI:58349"/>
        <dbReference type="EC" id="1.1.1.94"/>
    </reaction>
    <physiologicalReaction direction="right-to-left" evidence="1">
        <dbReference type="Rhea" id="RHEA:11098"/>
    </physiologicalReaction>
</comment>
<comment type="pathway">
    <text evidence="1">Membrane lipid metabolism; glycerophospholipid metabolism.</text>
</comment>
<comment type="subcellular location">
    <subcellularLocation>
        <location evidence="1">Cytoplasm</location>
    </subcellularLocation>
</comment>
<comment type="similarity">
    <text evidence="1">Belongs to the NAD-dependent glycerol-3-phosphate dehydrogenase family.</text>
</comment>
<comment type="sequence caution" evidence="2">
    <conflict type="erroneous initiation">
        <sequence resource="EMBL-CDS" id="CAC30632"/>
    </conflict>
</comment>
<proteinExistence type="inferred from homology"/>
<protein>
    <recommendedName>
        <fullName evidence="1">Glycerol-3-phosphate dehydrogenase [NAD(P)+]</fullName>
        <ecNumber evidence="1">1.1.1.94</ecNumber>
    </recommendedName>
    <alternativeName>
        <fullName evidence="1">NAD(P)(+)-dependent glycerol-3-phosphate dehydrogenase</fullName>
    </alternativeName>
    <alternativeName>
        <fullName evidence="1">NAD(P)H-dependent dihydroxyacetone-phosphate reductase</fullName>
    </alternativeName>
</protein>
<sequence length="349" mass="35618">MAGIVVRSESAVAVMGAGAWGTALAKVLIDAGGPEAGVVLWARRPDVAERINTTRCNRAYLPGTLLPPGIRATADPADALRGASTVLLGVPAQRMRANLERWGGLVADGATLVSLAKGIELGTLMRMSQVIVSVTGVDPAQVAVLSGPNLASEIAQCQPAATVIACSDLGRAVALQRMLSSGYFRPYTNSDVVGTEIGGVCKNVIALACGMAAGVGFGENTAATIITRGLAEIIRLGMALGAQVTTLAGLAGVGDLVATCTSPHSRNRSLGERLGRGEIMQSILHGMDGSDGGDGYVVEGVTSCASVLALASSYDVEMPLTDAVHRVCHKGLSVEKAMALLLGRSTKSE</sequence>
<accession>Q9CBR9</accession>
<accession>O33129</accession>
<gene>
    <name evidence="1" type="primary">gpsA</name>
    <name type="ordered locus">ML1679</name>
    <name type="ORF">MLCB637.38</name>
</gene>
<reference key="1">
    <citation type="journal article" date="2001" name="Nature">
        <title>Massive gene decay in the leprosy bacillus.</title>
        <authorList>
            <person name="Cole S.T."/>
            <person name="Eiglmeier K."/>
            <person name="Parkhill J."/>
            <person name="James K.D."/>
            <person name="Thomson N.R."/>
            <person name="Wheeler P.R."/>
            <person name="Honore N."/>
            <person name="Garnier T."/>
            <person name="Churcher C.M."/>
            <person name="Harris D.E."/>
            <person name="Mungall K.L."/>
            <person name="Basham D."/>
            <person name="Brown D."/>
            <person name="Chillingworth T."/>
            <person name="Connor R."/>
            <person name="Davies R.M."/>
            <person name="Devlin K."/>
            <person name="Duthoy S."/>
            <person name="Feltwell T."/>
            <person name="Fraser A."/>
            <person name="Hamlin N."/>
            <person name="Holroyd S."/>
            <person name="Hornsby T."/>
            <person name="Jagels K."/>
            <person name="Lacroix C."/>
            <person name="Maclean J."/>
            <person name="Moule S."/>
            <person name="Murphy L.D."/>
            <person name="Oliver K."/>
            <person name="Quail M.A."/>
            <person name="Rajandream M.A."/>
            <person name="Rutherford K.M."/>
            <person name="Rutter S."/>
            <person name="Seeger K."/>
            <person name="Simon S."/>
            <person name="Simmonds M."/>
            <person name="Skelton J."/>
            <person name="Squares R."/>
            <person name="Squares S."/>
            <person name="Stevens K."/>
            <person name="Taylor K."/>
            <person name="Whitehead S."/>
            <person name="Woodward J.R."/>
            <person name="Barrell B.G."/>
        </authorList>
    </citation>
    <scope>NUCLEOTIDE SEQUENCE [LARGE SCALE GENOMIC DNA]</scope>
    <source>
        <strain>TN</strain>
    </source>
</reference>
<evidence type="ECO:0000255" key="1">
    <source>
        <dbReference type="HAMAP-Rule" id="MF_00394"/>
    </source>
</evidence>
<evidence type="ECO:0000305" key="2"/>
<feature type="chain" id="PRO_0000137991" description="Glycerol-3-phosphate dehydrogenase [NAD(P)+]">
    <location>
        <begin position="1"/>
        <end position="349"/>
    </location>
</feature>
<feature type="active site" description="Proton acceptor" evidence="1">
    <location>
        <position position="202"/>
    </location>
</feature>
<feature type="binding site" evidence="1">
    <location>
        <position position="20"/>
    </location>
    <ligand>
        <name>NADPH</name>
        <dbReference type="ChEBI" id="CHEBI:57783"/>
    </ligand>
</feature>
<feature type="binding site" evidence="1">
    <location>
        <position position="43"/>
    </location>
    <ligand>
        <name>NADPH</name>
        <dbReference type="ChEBI" id="CHEBI:57783"/>
    </ligand>
</feature>
<feature type="binding site" evidence="1">
    <location>
        <position position="44"/>
    </location>
    <ligand>
        <name>NADPH</name>
        <dbReference type="ChEBI" id="CHEBI:57783"/>
    </ligand>
</feature>
<feature type="binding site" evidence="1">
    <location>
        <position position="117"/>
    </location>
    <ligand>
        <name>NADPH</name>
        <dbReference type="ChEBI" id="CHEBI:57783"/>
    </ligand>
</feature>
<feature type="binding site" evidence="1">
    <location>
        <position position="117"/>
    </location>
    <ligand>
        <name>sn-glycerol 3-phosphate</name>
        <dbReference type="ChEBI" id="CHEBI:57597"/>
    </ligand>
</feature>
<feature type="binding site" evidence="1">
    <location>
        <position position="147"/>
    </location>
    <ligand>
        <name>sn-glycerol 3-phosphate</name>
        <dbReference type="ChEBI" id="CHEBI:57597"/>
    </ligand>
</feature>
<feature type="binding site" evidence="1">
    <location>
        <position position="151"/>
    </location>
    <ligand>
        <name>NADPH</name>
        <dbReference type="ChEBI" id="CHEBI:57783"/>
    </ligand>
</feature>
<feature type="binding site" evidence="1">
    <location>
        <position position="202"/>
    </location>
    <ligand>
        <name>sn-glycerol 3-phosphate</name>
        <dbReference type="ChEBI" id="CHEBI:57597"/>
    </ligand>
</feature>
<feature type="binding site" evidence="1">
    <location>
        <position position="255"/>
    </location>
    <ligand>
        <name>sn-glycerol 3-phosphate</name>
        <dbReference type="ChEBI" id="CHEBI:57597"/>
    </ligand>
</feature>
<feature type="binding site" evidence="1">
    <location>
        <position position="265"/>
    </location>
    <ligand>
        <name>sn-glycerol 3-phosphate</name>
        <dbReference type="ChEBI" id="CHEBI:57597"/>
    </ligand>
</feature>
<feature type="binding site" evidence="1">
    <location>
        <position position="266"/>
    </location>
    <ligand>
        <name>NADPH</name>
        <dbReference type="ChEBI" id="CHEBI:57783"/>
    </ligand>
</feature>
<feature type="binding site" evidence="1">
    <location>
        <position position="266"/>
    </location>
    <ligand>
        <name>sn-glycerol 3-phosphate</name>
        <dbReference type="ChEBI" id="CHEBI:57597"/>
    </ligand>
</feature>
<feature type="binding site" evidence="1">
    <location>
        <position position="267"/>
    </location>
    <ligand>
        <name>sn-glycerol 3-phosphate</name>
        <dbReference type="ChEBI" id="CHEBI:57597"/>
    </ligand>
</feature>
<feature type="binding site" evidence="1">
    <location>
        <position position="297"/>
    </location>
    <ligand>
        <name>NADPH</name>
        <dbReference type="ChEBI" id="CHEBI:57783"/>
    </ligand>
</feature>
<feature type="binding site" evidence="1">
    <location>
        <position position="299"/>
    </location>
    <ligand>
        <name>NADPH</name>
        <dbReference type="ChEBI" id="CHEBI:57783"/>
    </ligand>
</feature>
<name>GPDA_MYCLE</name>